<keyword id="KW-0007">Acetylation</keyword>
<keyword id="KW-0025">Alternative splicing</keyword>
<keyword id="KW-0903">Direct protein sequencing</keyword>
<keyword id="KW-1017">Isopeptide bond</keyword>
<keyword id="KW-0488">Methylation</keyword>
<keyword id="KW-0507">mRNA processing</keyword>
<keyword id="KW-0508">mRNA splicing</keyword>
<keyword id="KW-0539">Nucleus</keyword>
<keyword id="KW-0597">Phosphoprotein</keyword>
<keyword id="KW-1185">Reference proteome</keyword>
<keyword id="KW-0677">Repeat</keyword>
<keyword id="KW-0687">Ribonucleoprotein</keyword>
<keyword id="KW-0694">RNA-binding</keyword>
<keyword id="KW-0747">Spliceosome</keyword>
<keyword id="KW-0832">Ubl conjugation</keyword>
<comment type="function">
    <text evidence="1">This protein is a component of the heterogeneous nuclear ribonucleoprotein (hnRNP) complexes which provide the substrate for the processing events that pre-mRNAs undergo before becoming functional, translatable mRNAs in the cytoplasm. Mediates pre-mRNA alternative splicing regulation. Inhibits, together with CUGBP1, insulin receptor (IR) pre-mRNA exon 11 inclusion in myoblast. Binds to the IR RNA. Binds poly(RG) (By similarity).</text>
</comment>
<comment type="subunit">
    <text evidence="1">Part of a ternary complex containing FUBP2, PTBP1, PTBP2 and HNRNPH1. Identified in the spliceosome C complex. Interacts with IGF2BP1. Interacts with CUGBP1; the interaction is RNA-dependent. Interacts with MBNL1; the interaction in RNA-independent (By similarity).</text>
</comment>
<comment type="subcellular location">
    <subcellularLocation>
        <location evidence="5">Nucleus</location>
        <location evidence="5">Nucleoplasm</location>
    </subcellularLocation>
</comment>
<comment type="alternative products">
    <event type="alternative splicing"/>
    <isoform>
        <id>Q8VHV7-1</id>
        <name>1</name>
        <sequence type="displayed"/>
    </isoform>
    <isoform>
        <id>Q8VHV7-2</id>
        <name>2</name>
        <sequence type="described" ref="VSP_025713"/>
    </isoform>
    <isoform>
        <id>Q8VHV7-3</id>
        <name>3</name>
        <sequence type="described" ref="VSP_025712"/>
    </isoform>
</comment>
<reference key="1">
    <citation type="submission" date="2001-04" db="EMBL/GenBank/DDBJ databases">
        <title>Screening genes associated with spermatogenesis.</title>
        <authorList>
            <person name="Lou L."/>
            <person name="Zhang Y."/>
            <person name="Jia M."/>
        </authorList>
    </citation>
    <scope>NUCLEOTIDE SEQUENCE [MRNA] (ISOFORM 3)</scope>
    <source>
        <tissue>Testis</tissue>
    </source>
</reference>
<reference key="2">
    <citation type="journal article" date="2004" name="Nature">
        <title>Genome sequence of the Brown Norway rat yields insights into mammalian evolution.</title>
        <authorList>
            <person name="Gibbs R.A."/>
            <person name="Weinstock G.M."/>
            <person name="Metzker M.L."/>
            <person name="Muzny D.M."/>
            <person name="Sodergren E.J."/>
            <person name="Scherer S."/>
            <person name="Scott G."/>
            <person name="Steffen D."/>
            <person name="Worley K.C."/>
            <person name="Burch P.E."/>
            <person name="Okwuonu G."/>
            <person name="Hines S."/>
            <person name="Lewis L."/>
            <person name="Deramo C."/>
            <person name="Delgado O."/>
            <person name="Dugan-Rocha S."/>
            <person name="Miner G."/>
            <person name="Morgan M."/>
            <person name="Hawes A."/>
            <person name="Gill R."/>
            <person name="Holt R.A."/>
            <person name="Adams M.D."/>
            <person name="Amanatides P.G."/>
            <person name="Baden-Tillson H."/>
            <person name="Barnstead M."/>
            <person name="Chin S."/>
            <person name="Evans C.A."/>
            <person name="Ferriera S."/>
            <person name="Fosler C."/>
            <person name="Glodek A."/>
            <person name="Gu Z."/>
            <person name="Jennings D."/>
            <person name="Kraft C.L."/>
            <person name="Nguyen T."/>
            <person name="Pfannkoch C.M."/>
            <person name="Sitter C."/>
            <person name="Sutton G.G."/>
            <person name="Venter J.C."/>
            <person name="Woodage T."/>
            <person name="Smith D."/>
            <person name="Lee H.-M."/>
            <person name="Gustafson E."/>
            <person name="Cahill P."/>
            <person name="Kana A."/>
            <person name="Doucette-Stamm L."/>
            <person name="Weinstock K."/>
            <person name="Fechtel K."/>
            <person name="Weiss R.B."/>
            <person name="Dunn D.M."/>
            <person name="Green E.D."/>
            <person name="Blakesley R.W."/>
            <person name="Bouffard G.G."/>
            <person name="De Jong P.J."/>
            <person name="Osoegawa K."/>
            <person name="Zhu B."/>
            <person name="Marra M."/>
            <person name="Schein J."/>
            <person name="Bosdet I."/>
            <person name="Fjell C."/>
            <person name="Jones S."/>
            <person name="Krzywinski M."/>
            <person name="Mathewson C."/>
            <person name="Siddiqui A."/>
            <person name="Wye N."/>
            <person name="McPherson J."/>
            <person name="Zhao S."/>
            <person name="Fraser C.M."/>
            <person name="Shetty J."/>
            <person name="Shatsman S."/>
            <person name="Geer K."/>
            <person name="Chen Y."/>
            <person name="Abramzon S."/>
            <person name="Nierman W.C."/>
            <person name="Havlak P.H."/>
            <person name="Chen R."/>
            <person name="Durbin K.J."/>
            <person name="Egan A."/>
            <person name="Ren Y."/>
            <person name="Song X.-Z."/>
            <person name="Li B."/>
            <person name="Liu Y."/>
            <person name="Qin X."/>
            <person name="Cawley S."/>
            <person name="Cooney A.J."/>
            <person name="D'Souza L.M."/>
            <person name="Martin K."/>
            <person name="Wu J.Q."/>
            <person name="Gonzalez-Garay M.L."/>
            <person name="Jackson A.R."/>
            <person name="Kalafus K.J."/>
            <person name="McLeod M.P."/>
            <person name="Milosavljevic A."/>
            <person name="Virk D."/>
            <person name="Volkov A."/>
            <person name="Wheeler D.A."/>
            <person name="Zhang Z."/>
            <person name="Bailey J.A."/>
            <person name="Eichler E.E."/>
            <person name="Tuzun E."/>
            <person name="Birney E."/>
            <person name="Mongin E."/>
            <person name="Ureta-Vidal A."/>
            <person name="Woodwark C."/>
            <person name="Zdobnov E."/>
            <person name="Bork P."/>
            <person name="Suyama M."/>
            <person name="Torrents D."/>
            <person name="Alexandersson M."/>
            <person name="Trask B.J."/>
            <person name="Young J.M."/>
            <person name="Huang H."/>
            <person name="Wang H."/>
            <person name="Xing H."/>
            <person name="Daniels S."/>
            <person name="Gietzen D."/>
            <person name="Schmidt J."/>
            <person name="Stevens K."/>
            <person name="Vitt U."/>
            <person name="Wingrove J."/>
            <person name="Camara F."/>
            <person name="Mar Alba M."/>
            <person name="Abril J.F."/>
            <person name="Guigo R."/>
            <person name="Smit A."/>
            <person name="Dubchak I."/>
            <person name="Rubin E.M."/>
            <person name="Couronne O."/>
            <person name="Poliakov A."/>
            <person name="Huebner N."/>
            <person name="Ganten D."/>
            <person name="Goesele C."/>
            <person name="Hummel O."/>
            <person name="Kreitler T."/>
            <person name="Lee Y.-A."/>
            <person name="Monti J."/>
            <person name="Schulz H."/>
            <person name="Zimdahl H."/>
            <person name="Himmelbauer H."/>
            <person name="Lehrach H."/>
            <person name="Jacob H.J."/>
            <person name="Bromberg S."/>
            <person name="Gullings-Handley J."/>
            <person name="Jensen-Seaman M.I."/>
            <person name="Kwitek A.E."/>
            <person name="Lazar J."/>
            <person name="Pasko D."/>
            <person name="Tonellato P.J."/>
            <person name="Twigger S."/>
            <person name="Ponting C.P."/>
            <person name="Duarte J.M."/>
            <person name="Rice S."/>
            <person name="Goodstadt L."/>
            <person name="Beatson S.A."/>
            <person name="Emes R.D."/>
            <person name="Winter E.E."/>
            <person name="Webber C."/>
            <person name="Brandt P."/>
            <person name="Nyakatura G."/>
            <person name="Adetobi M."/>
            <person name="Chiaromonte F."/>
            <person name="Elnitski L."/>
            <person name="Eswara P."/>
            <person name="Hardison R.C."/>
            <person name="Hou M."/>
            <person name="Kolbe D."/>
            <person name="Makova K."/>
            <person name="Miller W."/>
            <person name="Nekrutenko A."/>
            <person name="Riemer C."/>
            <person name="Schwartz S."/>
            <person name="Taylor J."/>
            <person name="Yang S."/>
            <person name="Zhang Y."/>
            <person name="Lindpaintner K."/>
            <person name="Andrews T.D."/>
            <person name="Caccamo M."/>
            <person name="Clamp M."/>
            <person name="Clarke L."/>
            <person name="Curwen V."/>
            <person name="Durbin R.M."/>
            <person name="Eyras E."/>
            <person name="Searle S.M."/>
            <person name="Cooper G.M."/>
            <person name="Batzoglou S."/>
            <person name="Brudno M."/>
            <person name="Sidow A."/>
            <person name="Stone E.A."/>
            <person name="Payseur B.A."/>
            <person name="Bourque G."/>
            <person name="Lopez-Otin C."/>
            <person name="Puente X.S."/>
            <person name="Chakrabarti K."/>
            <person name="Chatterji S."/>
            <person name="Dewey C."/>
            <person name="Pachter L."/>
            <person name="Bray N."/>
            <person name="Yap V.B."/>
            <person name="Caspi A."/>
            <person name="Tesler G."/>
            <person name="Pevzner P.A."/>
            <person name="Haussler D."/>
            <person name="Roskin K.M."/>
            <person name="Baertsch R."/>
            <person name="Clawson H."/>
            <person name="Furey T.S."/>
            <person name="Hinrichs A.S."/>
            <person name="Karolchik D."/>
            <person name="Kent W.J."/>
            <person name="Rosenbloom K.R."/>
            <person name="Trumbower H."/>
            <person name="Weirauch M."/>
            <person name="Cooper D.N."/>
            <person name="Stenson P.D."/>
            <person name="Ma B."/>
            <person name="Brent M."/>
            <person name="Arumugam M."/>
            <person name="Shteynberg D."/>
            <person name="Copley R.R."/>
            <person name="Taylor M.S."/>
            <person name="Riethman H."/>
            <person name="Mudunuri U."/>
            <person name="Peterson J."/>
            <person name="Guyer M."/>
            <person name="Felsenfeld A."/>
            <person name="Old S."/>
            <person name="Mockrin S."/>
            <person name="Collins F.S."/>
        </authorList>
    </citation>
    <scope>NUCLEOTIDE SEQUENCE [LARGE SCALE GENOMIC DNA]</scope>
    <source>
        <strain>Brown Norway</strain>
    </source>
</reference>
<reference key="3">
    <citation type="journal article" date="2004" name="Genome Res.">
        <title>The status, quality, and expansion of the NIH full-length cDNA project: the Mammalian Gene Collection (MGC).</title>
        <authorList>
            <consortium name="The MGC Project Team"/>
        </authorList>
    </citation>
    <scope>NUCLEOTIDE SEQUENCE [LARGE SCALE MRNA] (ISOFORM 2)</scope>
    <source>
        <tissue>Brain</tissue>
    </source>
</reference>
<reference key="4">
    <citation type="submission" date="2009-01" db="UniProtKB">
        <authorList>
            <person name="Lubec G."/>
            <person name="Chen W.-Q."/>
        </authorList>
    </citation>
    <scope>PROTEIN SEQUENCE OF 2-14; 17-29; 36-44; 50-68; 88-114; 151-167; 263-294; 300-316; 327-347 AND 356-375</scope>
    <scope>IDENTIFICATION BY MASS SPECTROMETRY</scope>
    <source>
        <strain>Sprague-Dawley</strain>
        <tissue>Hippocampus</tissue>
    </source>
</reference>
<reference key="5">
    <citation type="journal article" date="2009" name="Proteomics">
        <title>Proteome profile of the mature rat olfactory bulb.</title>
        <authorList>
            <person name="Maurya D.K."/>
            <person name="Sundaram C.S."/>
            <person name="Bhargava P."/>
        </authorList>
    </citation>
    <scope>IDENTIFICATION BY MASS SPECTROMETRY</scope>
    <scope>SUBCELLULAR LOCATION</scope>
</reference>
<proteinExistence type="evidence at protein level"/>
<evidence type="ECO:0000250" key="1"/>
<evidence type="ECO:0000250" key="2">
    <source>
        <dbReference type="UniProtKB" id="P31943"/>
    </source>
</evidence>
<evidence type="ECO:0000250" key="3">
    <source>
        <dbReference type="UniProtKB" id="P55795"/>
    </source>
</evidence>
<evidence type="ECO:0000255" key="4">
    <source>
        <dbReference type="PROSITE-ProRule" id="PRU00176"/>
    </source>
</evidence>
<evidence type="ECO:0000269" key="5">
    <source>
    </source>
</evidence>
<evidence type="ECO:0000303" key="6">
    <source>
    </source>
</evidence>
<evidence type="ECO:0000303" key="7">
    <source ref="1"/>
</evidence>
<evidence type="ECO:0000305" key="8"/>
<dbReference type="EMBL" id="AF367468">
    <property type="protein sequence ID" value="AAL59557.1"/>
    <property type="molecule type" value="mRNA"/>
</dbReference>
<dbReference type="EMBL" id="AABR03073723">
    <property type="status" value="NOT_ANNOTATED_CDS"/>
    <property type="molecule type" value="Genomic_DNA"/>
</dbReference>
<dbReference type="EMBL" id="BC129087">
    <property type="protein sequence ID" value="AAI29088.1"/>
    <property type="molecule type" value="mRNA"/>
</dbReference>
<dbReference type="RefSeq" id="NP_543172.1">
    <property type="nucleotide sequence ID" value="NM_080896.1"/>
</dbReference>
<dbReference type="SMR" id="Q8VHV7"/>
<dbReference type="BioGRID" id="250865">
    <property type="interactions" value="8"/>
</dbReference>
<dbReference type="FunCoup" id="Q8VHV7">
    <property type="interactions" value="2950"/>
</dbReference>
<dbReference type="IntAct" id="Q8VHV7">
    <property type="interactions" value="4"/>
</dbReference>
<dbReference type="MINT" id="Q8VHV7"/>
<dbReference type="STRING" id="10116.ENSRNOP00000068707"/>
<dbReference type="iPTMnet" id="Q8VHV7"/>
<dbReference type="PhosphoSitePlus" id="Q8VHV7"/>
<dbReference type="jPOST" id="Q8VHV7"/>
<dbReference type="PaxDb" id="10116-ENSRNOP00000055962"/>
<dbReference type="PeptideAtlas" id="Q8VHV7"/>
<dbReference type="GeneID" id="140931"/>
<dbReference type="KEGG" id="rno:140931"/>
<dbReference type="UCSC" id="RGD:620840">
    <molecule id="Q8VHV7-1"/>
    <property type="organism name" value="rat"/>
</dbReference>
<dbReference type="AGR" id="RGD:620840"/>
<dbReference type="CTD" id="3187"/>
<dbReference type="RGD" id="620840">
    <property type="gene designation" value="Hnrnph1"/>
</dbReference>
<dbReference type="eggNOG" id="KOG4211">
    <property type="taxonomic scope" value="Eukaryota"/>
</dbReference>
<dbReference type="InParanoid" id="Q8VHV7"/>
<dbReference type="PhylomeDB" id="Q8VHV7"/>
<dbReference type="Reactome" id="R-RNO-72163">
    <property type="pathway name" value="mRNA Splicing - Major Pathway"/>
</dbReference>
<dbReference type="Reactome" id="R-RNO-72203">
    <property type="pathway name" value="Processing of Capped Intron-Containing Pre-mRNA"/>
</dbReference>
<dbReference type="PRO" id="PR:Q8VHV7"/>
<dbReference type="Proteomes" id="UP000002494">
    <property type="component" value="Unplaced"/>
</dbReference>
<dbReference type="GO" id="GO:0071013">
    <property type="term" value="C:catalytic step 2 spliceosome"/>
    <property type="evidence" value="ECO:0000266"/>
    <property type="project" value="RGD"/>
</dbReference>
<dbReference type="GO" id="GO:0005654">
    <property type="term" value="C:nucleoplasm"/>
    <property type="evidence" value="ECO:0000314"/>
    <property type="project" value="RGD"/>
</dbReference>
<dbReference type="GO" id="GO:0005634">
    <property type="term" value="C:nucleus"/>
    <property type="evidence" value="ECO:0000266"/>
    <property type="project" value="RGD"/>
</dbReference>
<dbReference type="GO" id="GO:0014069">
    <property type="term" value="C:postsynaptic density"/>
    <property type="evidence" value="ECO:0000314"/>
    <property type="project" value="SynGO"/>
</dbReference>
<dbReference type="GO" id="GO:1990904">
    <property type="term" value="C:ribonucleoprotein complex"/>
    <property type="evidence" value="ECO:0000318"/>
    <property type="project" value="GO_Central"/>
</dbReference>
<dbReference type="GO" id="GO:0019899">
    <property type="term" value="F:enzyme binding"/>
    <property type="evidence" value="ECO:0000353"/>
    <property type="project" value="RGD"/>
</dbReference>
<dbReference type="GO" id="GO:0042802">
    <property type="term" value="F:identical protein binding"/>
    <property type="evidence" value="ECO:0000266"/>
    <property type="project" value="RGD"/>
</dbReference>
<dbReference type="GO" id="GO:0003723">
    <property type="term" value="F:RNA binding"/>
    <property type="evidence" value="ECO:0000250"/>
    <property type="project" value="UniProtKB"/>
</dbReference>
<dbReference type="GO" id="GO:0098761">
    <property type="term" value="P:cellular response to interleukin-7"/>
    <property type="evidence" value="ECO:0000266"/>
    <property type="project" value="RGD"/>
</dbReference>
<dbReference type="GO" id="GO:1901653">
    <property type="term" value="P:cellular response to peptide"/>
    <property type="evidence" value="ECO:0000270"/>
    <property type="project" value="RGD"/>
</dbReference>
<dbReference type="GO" id="GO:0006397">
    <property type="term" value="P:mRNA processing"/>
    <property type="evidence" value="ECO:0007669"/>
    <property type="project" value="UniProtKB-KW"/>
</dbReference>
<dbReference type="GO" id="GO:0043484">
    <property type="term" value="P:regulation of RNA splicing"/>
    <property type="evidence" value="ECO:0000250"/>
    <property type="project" value="UniProtKB"/>
</dbReference>
<dbReference type="GO" id="GO:0006396">
    <property type="term" value="P:RNA processing"/>
    <property type="evidence" value="ECO:0000304"/>
    <property type="project" value="RGD"/>
</dbReference>
<dbReference type="GO" id="GO:0008380">
    <property type="term" value="P:RNA splicing"/>
    <property type="evidence" value="ECO:0007669"/>
    <property type="project" value="UniProtKB-KW"/>
</dbReference>
<dbReference type="CDD" id="cd12729">
    <property type="entry name" value="RRM1_hnRNPH_hnRNPH2_hnRNPF"/>
    <property type="match status" value="1"/>
</dbReference>
<dbReference type="CDD" id="cd12731">
    <property type="entry name" value="RRM2_hnRNPH_hnRNPH2_hnRNPF"/>
    <property type="match status" value="1"/>
</dbReference>
<dbReference type="CDD" id="cd12734">
    <property type="entry name" value="RRM3_hnRNPH_hnRNPH2_hnRNPF"/>
    <property type="match status" value="1"/>
</dbReference>
<dbReference type="FunFam" id="3.30.70.330:FF:000071">
    <property type="entry name" value="heterogeneous nuclear ribonucleoprotein H isoform X1"/>
    <property type="match status" value="1"/>
</dbReference>
<dbReference type="FunFam" id="3.30.70.330:FF:000075">
    <property type="entry name" value="Heterogeneous nuclear ribonucleoprotein H1 (H)"/>
    <property type="match status" value="1"/>
</dbReference>
<dbReference type="FunFam" id="3.30.70.330:FF:000031">
    <property type="entry name" value="Heterogeneous nuclear ribonucleoprotein h3 isoform"/>
    <property type="match status" value="1"/>
</dbReference>
<dbReference type="Gene3D" id="3.30.70.330">
    <property type="match status" value="3"/>
</dbReference>
<dbReference type="InterPro" id="IPR050666">
    <property type="entry name" value="ESRP"/>
</dbReference>
<dbReference type="InterPro" id="IPR012677">
    <property type="entry name" value="Nucleotide-bd_a/b_plait_sf"/>
</dbReference>
<dbReference type="InterPro" id="IPR035979">
    <property type="entry name" value="RBD_domain_sf"/>
</dbReference>
<dbReference type="InterPro" id="IPR000504">
    <property type="entry name" value="RRM_dom"/>
</dbReference>
<dbReference type="InterPro" id="IPR012996">
    <property type="entry name" value="Znf_CHHC"/>
</dbReference>
<dbReference type="PANTHER" id="PTHR13976">
    <property type="entry name" value="HETEROGENEOUS NUCLEAR RIBONUCLEOPROTEIN-RELATED"/>
    <property type="match status" value="1"/>
</dbReference>
<dbReference type="Pfam" id="PF00076">
    <property type="entry name" value="RRM_1"/>
    <property type="match status" value="3"/>
</dbReference>
<dbReference type="Pfam" id="PF08080">
    <property type="entry name" value="zf-RNPHF"/>
    <property type="match status" value="1"/>
</dbReference>
<dbReference type="SMART" id="SM00360">
    <property type="entry name" value="RRM"/>
    <property type="match status" value="3"/>
</dbReference>
<dbReference type="SUPFAM" id="SSF54928">
    <property type="entry name" value="RNA-binding domain, RBD"/>
    <property type="match status" value="3"/>
</dbReference>
<dbReference type="PROSITE" id="PS50102">
    <property type="entry name" value="RRM"/>
    <property type="match status" value="3"/>
</dbReference>
<organism>
    <name type="scientific">Rattus norvegicus</name>
    <name type="common">Rat</name>
    <dbReference type="NCBI Taxonomy" id="10116"/>
    <lineage>
        <taxon>Eukaryota</taxon>
        <taxon>Metazoa</taxon>
        <taxon>Chordata</taxon>
        <taxon>Craniata</taxon>
        <taxon>Vertebrata</taxon>
        <taxon>Euteleostomi</taxon>
        <taxon>Mammalia</taxon>
        <taxon>Eutheria</taxon>
        <taxon>Euarchontoglires</taxon>
        <taxon>Glires</taxon>
        <taxon>Rodentia</taxon>
        <taxon>Myomorpha</taxon>
        <taxon>Muroidea</taxon>
        <taxon>Muridae</taxon>
        <taxon>Murinae</taxon>
        <taxon>Rattus</taxon>
    </lineage>
</organism>
<protein>
    <recommendedName>
        <fullName>Heterogeneous nuclear ribonucleoprotein H</fullName>
        <shortName>hnRNP H</shortName>
    </recommendedName>
    <alternativeName>
        <fullName>Ratsg1</fullName>
    </alternativeName>
    <component>
        <recommendedName>
            <fullName>Heterogeneous nuclear ribonucleoprotein H, N-terminally processed</fullName>
        </recommendedName>
    </component>
</protein>
<sequence>MMLGAEGGEGFVVKVRGLPWSCSADEVQRFFSDCKIQNGAQGIRFIYTREGRPSGEAFVELESEDEVKLALKKDRETMGHRYVEVFKSNNVEMDWVLKHTGPNSPDTANDGFVRLRGLPFGCSEEEIVQFFSGLEIVPNGITLPVDFQGRSTGEAFVQFASQEIAEKALKKHKERIGHRYIEIFKSSRAEVRTHYDPPRKLMAMQRPGPYDRPGAGRGYNSIGRGAGFERMRRGAYGGGYGGYDDYNGYNDGYGFGSDRFGRDLNYCFSGMSDHRYGDGGSTFQSTTGHCVHMRGLPYRATENDIYNFFSPLNPVRVHIETGPDGRVTGEADVEFATHEDAVAAMSKDKANMQHRYVELFLNSTAGASGGAYEHRYVELFLNSTAGASGGAYGSQMMGGMGLSNQSSYGGPASQQLSGGYGGGYGGQSSMSGYDQVLQENSSDFQSNIA</sequence>
<feature type="chain" id="PRO_0000288557" description="Heterogeneous nuclear ribonucleoprotein H">
    <location>
        <begin position="1"/>
        <end position="449"/>
    </location>
</feature>
<feature type="initiator methionine" description="Removed; alternate" evidence="2">
    <location>
        <position position="1"/>
    </location>
</feature>
<feature type="chain" id="PRO_0000367121" description="Heterogeneous nuclear ribonucleoprotein H, N-terminally processed">
    <location>
        <begin position="2"/>
        <end position="449"/>
    </location>
</feature>
<feature type="domain" description="RRM 1" evidence="4">
    <location>
        <begin position="11"/>
        <end position="90"/>
    </location>
</feature>
<feature type="domain" description="RRM 2" evidence="4">
    <location>
        <begin position="111"/>
        <end position="188"/>
    </location>
</feature>
<feature type="repeat" description="1-1">
    <location>
        <begin position="234"/>
        <end position="249"/>
    </location>
</feature>
<feature type="domain" description="RRM 3" evidence="4">
    <location>
        <begin position="289"/>
        <end position="364"/>
    </location>
</feature>
<feature type="repeat" description="2-1">
    <location>
        <begin position="354"/>
        <end position="372"/>
    </location>
</feature>
<feature type="repeat" description="2-2">
    <location>
        <begin position="374"/>
        <end position="392"/>
    </location>
</feature>
<feature type="repeat" description="1-2">
    <location>
        <begin position="418"/>
        <end position="433"/>
    </location>
</feature>
<feature type="region of interest" description="2 X 16 AA Gly-rich approximate repeats">
    <location>
        <begin position="234"/>
        <end position="433"/>
    </location>
</feature>
<feature type="region of interest" description="2 X 19 AA perfect repeats">
    <location>
        <begin position="354"/>
        <end position="392"/>
    </location>
</feature>
<feature type="modified residue" description="N-acetylmethionine" evidence="2">
    <location>
        <position position="1"/>
    </location>
</feature>
<feature type="modified residue" description="N-acetylmethionine; in Heterogeneous nuclear ribonucleoprotein H, N-terminally processed" evidence="2">
    <location>
        <position position="2"/>
    </location>
</feature>
<feature type="modified residue" description="Phosphoserine" evidence="2">
    <location>
        <position position="23"/>
    </location>
</feature>
<feature type="modified residue" description="Phosphoserine" evidence="2">
    <location>
        <position position="54"/>
    </location>
</feature>
<feature type="modified residue" description="Phosphoserine" evidence="2">
    <location>
        <position position="63"/>
    </location>
</feature>
<feature type="modified residue" description="Dimethylated arginine; alternate" evidence="2">
    <location>
        <position position="233"/>
    </location>
</feature>
<feature type="modified residue" description="Omega-N-methylarginine; alternate" evidence="2">
    <location>
        <position position="233"/>
    </location>
</feature>
<feature type="modified residue" description="Phosphotyrosine" evidence="2">
    <location>
        <position position="246"/>
    </location>
</feature>
<feature type="modified residue" description="Phosphoserine" evidence="3">
    <location>
        <position position="310"/>
    </location>
</feature>
<feature type="cross-link" description="Glycyl lysine isopeptide (Lys-Gly) (interchain with G-Cter in SUMO2)" evidence="2">
    <location>
        <position position="35"/>
    </location>
</feature>
<feature type="cross-link" description="Glycyl lysine isopeptide (Lys-Gly) (interchain with G-Cter in SUMO2)" evidence="2">
    <location>
        <position position="87"/>
    </location>
</feature>
<feature type="cross-link" description="Glycyl lysine isopeptide (Lys-Gly) (interchain with G-Cter in SUMO2)" evidence="2">
    <location>
        <position position="98"/>
    </location>
</feature>
<feature type="splice variant" id="VSP_025712" description="In isoform 3." evidence="7">
    <location>
        <begin position="1"/>
        <end position="77"/>
    </location>
</feature>
<feature type="splice variant" id="VSP_025713" description="In isoform 2." evidence="6">
    <location>
        <begin position="354"/>
        <end position="373"/>
    </location>
</feature>
<feature type="sequence conflict" description="In Ref. 3; AAI29088." evidence="8" ref="3">
    <original>E</original>
    <variation>K</variation>
    <location>
        <position position="124"/>
    </location>
</feature>
<feature type="sequence conflict" description="In Ref. 3; AAI29088." evidence="8" ref="3">
    <original>T</original>
    <variation>I</variation>
    <location>
        <position position="321"/>
    </location>
</feature>
<feature type="sequence conflict" description="In Ref. 3; AAI29088." evidence="8" ref="3">
    <original>M</original>
    <variation>L</variation>
    <location>
        <position position="397"/>
    </location>
</feature>
<name>HNRH1_RAT</name>
<gene>
    <name type="primary">Hnrnph1</name>
    <name type="synonym">Hnrph</name>
    <name type="synonym">Hnrph1</name>
</gene>
<accession>Q8VHV7</accession>
<accession>A1L1J1</accession>